<keyword id="KW-1185">Reference proteome</keyword>
<feature type="chain" id="PRO_0000147385" description="Iron-sulfur cluster assembly SufBD family protein ML0594">
    <location>
        <begin position="1"/>
        <end position="392"/>
    </location>
</feature>
<protein>
    <recommendedName>
        <fullName>Iron-sulfur cluster assembly SufBD family protein ML0594</fullName>
    </recommendedName>
</protein>
<organism>
    <name type="scientific">Mycobacterium leprae (strain TN)</name>
    <dbReference type="NCBI Taxonomy" id="272631"/>
    <lineage>
        <taxon>Bacteria</taxon>
        <taxon>Bacillati</taxon>
        <taxon>Actinomycetota</taxon>
        <taxon>Actinomycetes</taxon>
        <taxon>Mycobacteriales</taxon>
        <taxon>Mycobacteriaceae</taxon>
        <taxon>Mycobacterium</taxon>
    </lineage>
</organism>
<accession>Q49682</accession>
<dbReference type="EMBL" id="U00013">
    <property type="protein sequence ID" value="AAA17119.1"/>
    <property type="molecule type" value="Genomic_DNA"/>
</dbReference>
<dbReference type="EMBL" id="Z99125">
    <property type="protein sequence ID" value="CAB16170.1"/>
    <property type="molecule type" value="Genomic_DNA"/>
</dbReference>
<dbReference type="EMBL" id="AL583919">
    <property type="protein sequence ID" value="CAC30102.1"/>
    <property type="molecule type" value="Genomic_DNA"/>
</dbReference>
<dbReference type="PIR" id="S72753">
    <property type="entry name" value="S72753"/>
</dbReference>
<dbReference type="RefSeq" id="NP_301503.1">
    <property type="nucleotide sequence ID" value="NC_002677.1"/>
</dbReference>
<dbReference type="SMR" id="Q49682"/>
<dbReference type="STRING" id="272631.gene:17574415"/>
<dbReference type="KEGG" id="mle:ML0594"/>
<dbReference type="PATRIC" id="fig|272631.5.peg.1032"/>
<dbReference type="Leproma" id="ML0594"/>
<dbReference type="eggNOG" id="COG0719">
    <property type="taxonomic scope" value="Bacteria"/>
</dbReference>
<dbReference type="HOGENOM" id="CLU_026231_6_0_11"/>
<dbReference type="OrthoDB" id="9803529at2"/>
<dbReference type="Proteomes" id="UP000000806">
    <property type="component" value="Chromosome"/>
</dbReference>
<dbReference type="GO" id="GO:0016226">
    <property type="term" value="P:iron-sulfur cluster assembly"/>
    <property type="evidence" value="ECO:0007669"/>
    <property type="project" value="InterPro"/>
</dbReference>
<dbReference type="InterPro" id="IPR055346">
    <property type="entry name" value="Fe-S_cluster_assembly_SufBD"/>
</dbReference>
<dbReference type="InterPro" id="IPR000825">
    <property type="entry name" value="SUF_FeS_clus_asmbl_SufBD_core"/>
</dbReference>
<dbReference type="InterPro" id="IPR037284">
    <property type="entry name" value="SUF_FeS_clus_asmbl_SufBD_sf"/>
</dbReference>
<dbReference type="InterPro" id="IPR011542">
    <property type="entry name" value="SUF_FeS_clus_asmbl_SufD"/>
</dbReference>
<dbReference type="NCBIfam" id="TIGR01981">
    <property type="entry name" value="sufD"/>
    <property type="match status" value="1"/>
</dbReference>
<dbReference type="PANTHER" id="PTHR43575">
    <property type="entry name" value="PROTEIN ABCI7, CHLOROPLASTIC"/>
    <property type="match status" value="1"/>
</dbReference>
<dbReference type="PANTHER" id="PTHR43575:SF1">
    <property type="entry name" value="PROTEIN ABCI7, CHLOROPLASTIC"/>
    <property type="match status" value="1"/>
</dbReference>
<dbReference type="Pfam" id="PF01458">
    <property type="entry name" value="SUFBD_core"/>
    <property type="match status" value="1"/>
</dbReference>
<dbReference type="SUPFAM" id="SSF101960">
    <property type="entry name" value="Stabilizer of iron transporter SufD"/>
    <property type="match status" value="1"/>
</dbReference>
<sequence>MTAVEGSSLTALNKGRLFASFDVDAFEVPGGRDEIWRFTPLRRLRGLHDGSAVANGKVHIRVSQQSGVQTEIVGRGDGRLGQGGIPTDRVAAQAFSSFQSATVVTVGRDMQIATPINIAVTGPDKGAVVYGHLQIRVCKFGEAVVVIDHRGSGTYADNVEFIVEAAARLTVVWIADWADDMVHLSAHHALLGKDAVLRHITVTLGGEVVRVSANVRFSGPGGDAELLGLYFADDGQHLESRLLVDHAHPDCKSNVLYKGALQGDPVSSRPDAHTVWVGDVLIHPEATGTDTFEVNRNLVLTNGVRADSVPNLEIETDEIVGAGHASATGRFDDEQLFYLRSRGIGEEQARRLLVRGFFGEIISKIAVPQVRERLIAAIEHELTITESRSTAS</sequence>
<evidence type="ECO:0000305" key="1"/>
<name>Y594_MYCLE</name>
<gene>
    <name type="ordered locus">ML0594</name>
    <name type="ORF">B1496_C1_154</name>
    <name type="ORF">MLCL536.27c</name>
    <name type="ORF">u1496a</name>
</gene>
<reference key="1">
    <citation type="submission" date="1993-11" db="EMBL/GenBank/DDBJ databases">
        <authorList>
            <person name="Smith D.R."/>
            <person name="Robison K."/>
        </authorList>
    </citation>
    <scope>NUCLEOTIDE SEQUENCE [GENOMIC DNA]</scope>
</reference>
<reference key="2">
    <citation type="journal article" date="2001" name="Nature">
        <title>Massive gene decay in the leprosy bacillus.</title>
        <authorList>
            <person name="Cole S.T."/>
            <person name="Eiglmeier K."/>
            <person name="Parkhill J."/>
            <person name="James K.D."/>
            <person name="Thomson N.R."/>
            <person name="Wheeler P.R."/>
            <person name="Honore N."/>
            <person name="Garnier T."/>
            <person name="Churcher C.M."/>
            <person name="Harris D.E."/>
            <person name="Mungall K.L."/>
            <person name="Basham D."/>
            <person name="Brown D."/>
            <person name="Chillingworth T."/>
            <person name="Connor R."/>
            <person name="Davies R.M."/>
            <person name="Devlin K."/>
            <person name="Duthoy S."/>
            <person name="Feltwell T."/>
            <person name="Fraser A."/>
            <person name="Hamlin N."/>
            <person name="Holroyd S."/>
            <person name="Hornsby T."/>
            <person name="Jagels K."/>
            <person name="Lacroix C."/>
            <person name="Maclean J."/>
            <person name="Moule S."/>
            <person name="Murphy L.D."/>
            <person name="Oliver K."/>
            <person name="Quail M.A."/>
            <person name="Rajandream M.A."/>
            <person name="Rutherford K.M."/>
            <person name="Rutter S."/>
            <person name="Seeger K."/>
            <person name="Simon S."/>
            <person name="Simmonds M."/>
            <person name="Skelton J."/>
            <person name="Squares R."/>
            <person name="Squares S."/>
            <person name="Stevens K."/>
            <person name="Taylor K."/>
            <person name="Whitehead S."/>
            <person name="Woodward J.R."/>
            <person name="Barrell B.G."/>
        </authorList>
    </citation>
    <scope>NUCLEOTIDE SEQUENCE [LARGE SCALE GENOMIC DNA]</scope>
    <source>
        <strain>TN</strain>
    </source>
</reference>
<comment type="similarity">
    <text evidence="1">Belongs to the iron-sulfur cluster assembly SufBD family.</text>
</comment>
<proteinExistence type="inferred from homology"/>